<protein>
    <recommendedName>
        <fullName evidence="1">Glutaminase</fullName>
        <ecNumber evidence="1">3.5.1.2</ecNumber>
    </recommendedName>
</protein>
<keyword id="KW-0378">Hydrolase</keyword>
<sequence length="308" mass="33627">MAWAMDNAILETILQRVRPLIGQGKVADYIPALASVEGSKLGIAICTVDGQHYQAGDAHERFSIQSISKVLSLVVAMRHYPEEEIWQRVGKDPSGSPFNSLVQLEMEQGIPRNPFINAGALVVCDMLQGRLSAPRQRMLEVVRALCGVSDITYDATVARSEFEHSARNAAIAWLMKSFGNFHHDVPTVLQNYFHYCALKMSCMELARTFVFLANQGEAFHLDEPVVTPMQARQINALMATSGMYQNAGEFAWRVGLPAKSGVGGGIVAIVPHEMAIAVWSPELDPAGNSLAGIAALEQLTQTLGRSVY</sequence>
<gene>
    <name evidence="1" type="primary">glsA</name>
    <name type="ordered locus">SEN1526</name>
</gene>
<organism>
    <name type="scientific">Salmonella enteritidis PT4 (strain P125109)</name>
    <dbReference type="NCBI Taxonomy" id="550537"/>
    <lineage>
        <taxon>Bacteria</taxon>
        <taxon>Pseudomonadati</taxon>
        <taxon>Pseudomonadota</taxon>
        <taxon>Gammaproteobacteria</taxon>
        <taxon>Enterobacterales</taxon>
        <taxon>Enterobacteriaceae</taxon>
        <taxon>Salmonella</taxon>
    </lineage>
</organism>
<dbReference type="EC" id="3.5.1.2" evidence="1"/>
<dbReference type="EMBL" id="AM933172">
    <property type="protein sequence ID" value="CAR33105.1"/>
    <property type="molecule type" value="Genomic_DNA"/>
</dbReference>
<dbReference type="SMR" id="B5QTS1"/>
<dbReference type="KEGG" id="set:SEN1526"/>
<dbReference type="HOGENOM" id="CLU_027932_1_1_6"/>
<dbReference type="Proteomes" id="UP000000613">
    <property type="component" value="Chromosome"/>
</dbReference>
<dbReference type="GO" id="GO:0004359">
    <property type="term" value="F:glutaminase activity"/>
    <property type="evidence" value="ECO:0007669"/>
    <property type="project" value="UniProtKB-UniRule"/>
</dbReference>
<dbReference type="GO" id="GO:0006537">
    <property type="term" value="P:glutamate biosynthetic process"/>
    <property type="evidence" value="ECO:0007669"/>
    <property type="project" value="TreeGrafter"/>
</dbReference>
<dbReference type="GO" id="GO:0006543">
    <property type="term" value="P:glutamine catabolic process"/>
    <property type="evidence" value="ECO:0007669"/>
    <property type="project" value="TreeGrafter"/>
</dbReference>
<dbReference type="FunFam" id="3.40.710.10:FF:000005">
    <property type="entry name" value="Glutaminase"/>
    <property type="match status" value="1"/>
</dbReference>
<dbReference type="Gene3D" id="3.40.710.10">
    <property type="entry name" value="DD-peptidase/beta-lactamase superfamily"/>
    <property type="match status" value="1"/>
</dbReference>
<dbReference type="HAMAP" id="MF_00313">
    <property type="entry name" value="Glutaminase"/>
    <property type="match status" value="1"/>
</dbReference>
<dbReference type="InterPro" id="IPR012338">
    <property type="entry name" value="Beta-lactam/transpept-like"/>
</dbReference>
<dbReference type="InterPro" id="IPR015868">
    <property type="entry name" value="Glutaminase"/>
</dbReference>
<dbReference type="NCBIfam" id="TIGR03814">
    <property type="entry name" value="Gln_ase"/>
    <property type="match status" value="1"/>
</dbReference>
<dbReference type="NCBIfam" id="NF002132">
    <property type="entry name" value="PRK00971.1-1"/>
    <property type="match status" value="1"/>
</dbReference>
<dbReference type="NCBIfam" id="NF002133">
    <property type="entry name" value="PRK00971.1-2"/>
    <property type="match status" value="1"/>
</dbReference>
<dbReference type="PANTHER" id="PTHR12544">
    <property type="entry name" value="GLUTAMINASE"/>
    <property type="match status" value="1"/>
</dbReference>
<dbReference type="PANTHER" id="PTHR12544:SF29">
    <property type="entry name" value="GLUTAMINASE"/>
    <property type="match status" value="1"/>
</dbReference>
<dbReference type="Pfam" id="PF04960">
    <property type="entry name" value="Glutaminase"/>
    <property type="match status" value="1"/>
</dbReference>
<dbReference type="SUPFAM" id="SSF56601">
    <property type="entry name" value="beta-lactamase/transpeptidase-like"/>
    <property type="match status" value="1"/>
</dbReference>
<evidence type="ECO:0000255" key="1">
    <source>
        <dbReference type="HAMAP-Rule" id="MF_00313"/>
    </source>
</evidence>
<accession>B5QTS1</accession>
<reference key="1">
    <citation type="journal article" date="2008" name="Genome Res.">
        <title>Comparative genome analysis of Salmonella enteritidis PT4 and Salmonella gallinarum 287/91 provides insights into evolutionary and host adaptation pathways.</title>
        <authorList>
            <person name="Thomson N.R."/>
            <person name="Clayton D.J."/>
            <person name="Windhorst D."/>
            <person name="Vernikos G."/>
            <person name="Davidson S."/>
            <person name="Churcher C."/>
            <person name="Quail M.A."/>
            <person name="Stevens M."/>
            <person name="Jones M.A."/>
            <person name="Watson M."/>
            <person name="Barron A."/>
            <person name="Layton A."/>
            <person name="Pickard D."/>
            <person name="Kingsley R.A."/>
            <person name="Bignell A."/>
            <person name="Clark L."/>
            <person name="Harris B."/>
            <person name="Ormond D."/>
            <person name="Abdellah Z."/>
            <person name="Brooks K."/>
            <person name="Cherevach I."/>
            <person name="Chillingworth T."/>
            <person name="Woodward J."/>
            <person name="Norberczak H."/>
            <person name="Lord A."/>
            <person name="Arrowsmith C."/>
            <person name="Jagels K."/>
            <person name="Moule S."/>
            <person name="Mungall K."/>
            <person name="Saunders M."/>
            <person name="Whitehead S."/>
            <person name="Chabalgoity J.A."/>
            <person name="Maskell D."/>
            <person name="Humphreys T."/>
            <person name="Roberts M."/>
            <person name="Barrow P.A."/>
            <person name="Dougan G."/>
            <person name="Parkhill J."/>
        </authorList>
    </citation>
    <scope>NUCLEOTIDE SEQUENCE [LARGE SCALE GENOMIC DNA]</scope>
    <source>
        <strain>P125109</strain>
    </source>
</reference>
<name>GLSA_SALEP</name>
<feature type="chain" id="PRO_1000115706" description="Glutaminase">
    <location>
        <begin position="1"/>
        <end position="308"/>
    </location>
</feature>
<feature type="binding site" evidence="1">
    <location>
        <position position="66"/>
    </location>
    <ligand>
        <name>substrate</name>
    </ligand>
</feature>
<feature type="binding site" evidence="1">
    <location>
        <position position="117"/>
    </location>
    <ligand>
        <name>substrate</name>
    </ligand>
</feature>
<feature type="binding site" evidence="1">
    <location>
        <position position="161"/>
    </location>
    <ligand>
        <name>substrate</name>
    </ligand>
</feature>
<feature type="binding site" evidence="1">
    <location>
        <position position="168"/>
    </location>
    <ligand>
        <name>substrate</name>
    </ligand>
</feature>
<feature type="binding site" evidence="1">
    <location>
        <position position="192"/>
    </location>
    <ligand>
        <name>substrate</name>
    </ligand>
</feature>
<feature type="binding site" evidence="1">
    <location>
        <position position="244"/>
    </location>
    <ligand>
        <name>substrate</name>
    </ligand>
</feature>
<feature type="binding site" evidence="1">
    <location>
        <position position="262"/>
    </location>
    <ligand>
        <name>substrate</name>
    </ligand>
</feature>
<proteinExistence type="inferred from homology"/>
<comment type="catalytic activity">
    <reaction evidence="1">
        <text>L-glutamine + H2O = L-glutamate + NH4(+)</text>
        <dbReference type="Rhea" id="RHEA:15889"/>
        <dbReference type="ChEBI" id="CHEBI:15377"/>
        <dbReference type="ChEBI" id="CHEBI:28938"/>
        <dbReference type="ChEBI" id="CHEBI:29985"/>
        <dbReference type="ChEBI" id="CHEBI:58359"/>
        <dbReference type="EC" id="3.5.1.2"/>
    </reaction>
</comment>
<comment type="subunit">
    <text evidence="1">Homotetramer.</text>
</comment>
<comment type="similarity">
    <text evidence="1">Belongs to the glutaminase family.</text>
</comment>